<keyword id="KW-0067">ATP-binding</keyword>
<keyword id="KW-0315">Glutamine amidotransferase</keyword>
<keyword id="KW-0332">GMP biosynthesis</keyword>
<keyword id="KW-0436">Ligase</keyword>
<keyword id="KW-0547">Nucleotide-binding</keyword>
<keyword id="KW-0658">Purine biosynthesis</keyword>
<keyword id="KW-1185">Reference proteome</keyword>
<organism>
    <name type="scientific">Psychromonas ingrahamii (strain DSM 17664 / CCUG 51855 / 37)</name>
    <dbReference type="NCBI Taxonomy" id="357804"/>
    <lineage>
        <taxon>Bacteria</taxon>
        <taxon>Pseudomonadati</taxon>
        <taxon>Pseudomonadota</taxon>
        <taxon>Gammaproteobacteria</taxon>
        <taxon>Alteromonadales</taxon>
        <taxon>Psychromonadaceae</taxon>
        <taxon>Psychromonas</taxon>
    </lineage>
</organism>
<protein>
    <recommendedName>
        <fullName evidence="1">GMP synthase [glutamine-hydrolyzing]</fullName>
        <ecNumber evidence="1">6.3.5.2</ecNumber>
    </recommendedName>
    <alternativeName>
        <fullName evidence="1">GMP synthetase</fullName>
    </alternativeName>
    <alternativeName>
        <fullName evidence="1">Glutamine amidotransferase</fullName>
    </alternativeName>
</protein>
<feature type="chain" id="PRO_1000120373" description="GMP synthase [glutamine-hydrolyzing]">
    <location>
        <begin position="1"/>
        <end position="526"/>
    </location>
</feature>
<feature type="domain" description="Glutamine amidotransferase type-1" evidence="1">
    <location>
        <begin position="9"/>
        <end position="208"/>
    </location>
</feature>
<feature type="domain" description="GMPS ATP-PPase" evidence="1">
    <location>
        <begin position="209"/>
        <end position="401"/>
    </location>
</feature>
<feature type="active site" description="Nucleophile" evidence="1">
    <location>
        <position position="86"/>
    </location>
</feature>
<feature type="active site" evidence="1">
    <location>
        <position position="182"/>
    </location>
</feature>
<feature type="active site" evidence="1">
    <location>
        <position position="184"/>
    </location>
</feature>
<feature type="binding site" evidence="1">
    <location>
        <begin position="236"/>
        <end position="242"/>
    </location>
    <ligand>
        <name>ATP</name>
        <dbReference type="ChEBI" id="CHEBI:30616"/>
    </ligand>
</feature>
<sequence>MDKNIHEQRILILDFGSQYTQLIARRIREIGVYCELWSWDVDEQDIKDFAPNGIILAGGPESVTAEGSPRAPEYVFTAGVPVLGICYGMQTMSEQLGGSVIKGEGEGEFGYAQIEVKGASELFKLIEDAVAQNGNALLDVWMSHGDKVSAIPAGFTTIANTATCQFAAIANEEKRFYGVQFHPEVTHTRQGERMLRHFVMDICGCETLWTSSSIIEDAVARMKAQIGDDEVILGLSGGVDSSVVAMLLQRAIGDKLTCVFVDNGLLRLNEGQQVMDMFGDHFGLKIIHVNAEHRFLEQMAGESDPEAKRKIIGRVFVEIFDEESKKLKNAKWLAQGTIYPDVIESAGSKTGKAQVIKSHHNVGGLPDDMEMGLVEPLRELFKDEVRKIGLELGLPYEMLYRHPFPGPGLGVRVLGEVKKEYCDLLRRADAIFIEELHKADLYHKVSQAFVVFLPVRSVGVMGDCRKYDWVVSLRCVETIDFMTARWSHLPYDLIGHVSNRIINEIDGISRVVYDVSGKPPATIEWE</sequence>
<name>GUAA_PSYIN</name>
<accession>A1SYT6</accession>
<comment type="function">
    <text evidence="1">Catalyzes the synthesis of GMP from XMP.</text>
</comment>
<comment type="catalytic activity">
    <reaction evidence="1">
        <text>XMP + L-glutamine + ATP + H2O = GMP + L-glutamate + AMP + diphosphate + 2 H(+)</text>
        <dbReference type="Rhea" id="RHEA:11680"/>
        <dbReference type="ChEBI" id="CHEBI:15377"/>
        <dbReference type="ChEBI" id="CHEBI:15378"/>
        <dbReference type="ChEBI" id="CHEBI:29985"/>
        <dbReference type="ChEBI" id="CHEBI:30616"/>
        <dbReference type="ChEBI" id="CHEBI:33019"/>
        <dbReference type="ChEBI" id="CHEBI:57464"/>
        <dbReference type="ChEBI" id="CHEBI:58115"/>
        <dbReference type="ChEBI" id="CHEBI:58359"/>
        <dbReference type="ChEBI" id="CHEBI:456215"/>
        <dbReference type="EC" id="6.3.5.2"/>
    </reaction>
</comment>
<comment type="pathway">
    <text evidence="1">Purine metabolism; GMP biosynthesis; GMP from XMP (L-Gln route): step 1/1.</text>
</comment>
<comment type="subunit">
    <text evidence="1">Homodimer.</text>
</comment>
<evidence type="ECO:0000255" key="1">
    <source>
        <dbReference type="HAMAP-Rule" id="MF_00344"/>
    </source>
</evidence>
<reference key="1">
    <citation type="journal article" date="2008" name="BMC Genomics">
        <title>Genomics of an extreme psychrophile, Psychromonas ingrahamii.</title>
        <authorList>
            <person name="Riley M."/>
            <person name="Staley J.T."/>
            <person name="Danchin A."/>
            <person name="Wang T.Z."/>
            <person name="Brettin T.S."/>
            <person name="Hauser L.J."/>
            <person name="Land M.L."/>
            <person name="Thompson L.S."/>
        </authorList>
    </citation>
    <scope>NUCLEOTIDE SEQUENCE [LARGE SCALE GENOMIC DNA]</scope>
    <source>
        <strain>DSM 17664 / CCUG 51855 / 37</strain>
    </source>
</reference>
<dbReference type="EC" id="6.3.5.2" evidence="1"/>
<dbReference type="EMBL" id="CP000510">
    <property type="protein sequence ID" value="ABM04651.1"/>
    <property type="molecule type" value="Genomic_DNA"/>
</dbReference>
<dbReference type="RefSeq" id="WP_011771205.1">
    <property type="nucleotide sequence ID" value="NC_008709.1"/>
</dbReference>
<dbReference type="SMR" id="A1SYT6"/>
<dbReference type="STRING" id="357804.Ping_2949"/>
<dbReference type="MEROPS" id="C26.A07"/>
<dbReference type="KEGG" id="pin:Ping_2949"/>
<dbReference type="eggNOG" id="COG0518">
    <property type="taxonomic scope" value="Bacteria"/>
</dbReference>
<dbReference type="eggNOG" id="COG0519">
    <property type="taxonomic scope" value="Bacteria"/>
</dbReference>
<dbReference type="HOGENOM" id="CLU_014340_0_5_6"/>
<dbReference type="OrthoDB" id="9802219at2"/>
<dbReference type="UniPathway" id="UPA00189">
    <property type="reaction ID" value="UER00296"/>
</dbReference>
<dbReference type="Proteomes" id="UP000000639">
    <property type="component" value="Chromosome"/>
</dbReference>
<dbReference type="GO" id="GO:0005829">
    <property type="term" value="C:cytosol"/>
    <property type="evidence" value="ECO:0007669"/>
    <property type="project" value="TreeGrafter"/>
</dbReference>
<dbReference type="GO" id="GO:0005524">
    <property type="term" value="F:ATP binding"/>
    <property type="evidence" value="ECO:0007669"/>
    <property type="project" value="UniProtKB-UniRule"/>
</dbReference>
<dbReference type="GO" id="GO:0003921">
    <property type="term" value="F:GMP synthase activity"/>
    <property type="evidence" value="ECO:0007669"/>
    <property type="project" value="InterPro"/>
</dbReference>
<dbReference type="CDD" id="cd01742">
    <property type="entry name" value="GATase1_GMP_Synthase"/>
    <property type="match status" value="1"/>
</dbReference>
<dbReference type="CDD" id="cd01997">
    <property type="entry name" value="GMP_synthase_C"/>
    <property type="match status" value="1"/>
</dbReference>
<dbReference type="FunFam" id="3.30.300.10:FF:000002">
    <property type="entry name" value="GMP synthase [glutamine-hydrolyzing]"/>
    <property type="match status" value="1"/>
</dbReference>
<dbReference type="FunFam" id="3.40.50.620:FF:000001">
    <property type="entry name" value="GMP synthase [glutamine-hydrolyzing]"/>
    <property type="match status" value="1"/>
</dbReference>
<dbReference type="FunFam" id="3.40.50.880:FF:000001">
    <property type="entry name" value="GMP synthase [glutamine-hydrolyzing]"/>
    <property type="match status" value="1"/>
</dbReference>
<dbReference type="Gene3D" id="3.30.300.10">
    <property type="match status" value="1"/>
</dbReference>
<dbReference type="Gene3D" id="3.40.50.880">
    <property type="match status" value="1"/>
</dbReference>
<dbReference type="Gene3D" id="3.40.50.620">
    <property type="entry name" value="HUPs"/>
    <property type="match status" value="1"/>
</dbReference>
<dbReference type="HAMAP" id="MF_00344">
    <property type="entry name" value="GMP_synthase"/>
    <property type="match status" value="1"/>
</dbReference>
<dbReference type="InterPro" id="IPR029062">
    <property type="entry name" value="Class_I_gatase-like"/>
</dbReference>
<dbReference type="InterPro" id="IPR017926">
    <property type="entry name" value="GATASE"/>
</dbReference>
<dbReference type="InterPro" id="IPR001674">
    <property type="entry name" value="GMP_synth_C"/>
</dbReference>
<dbReference type="InterPro" id="IPR004739">
    <property type="entry name" value="GMP_synth_GATase"/>
</dbReference>
<dbReference type="InterPro" id="IPR022955">
    <property type="entry name" value="GMP_synthase"/>
</dbReference>
<dbReference type="InterPro" id="IPR025777">
    <property type="entry name" value="GMPS_ATP_PPase_dom"/>
</dbReference>
<dbReference type="InterPro" id="IPR022310">
    <property type="entry name" value="NAD/GMP_synthase"/>
</dbReference>
<dbReference type="InterPro" id="IPR014729">
    <property type="entry name" value="Rossmann-like_a/b/a_fold"/>
</dbReference>
<dbReference type="NCBIfam" id="TIGR00884">
    <property type="entry name" value="guaA_Cterm"/>
    <property type="match status" value="1"/>
</dbReference>
<dbReference type="NCBIfam" id="TIGR00888">
    <property type="entry name" value="guaA_Nterm"/>
    <property type="match status" value="1"/>
</dbReference>
<dbReference type="NCBIfam" id="NF000848">
    <property type="entry name" value="PRK00074.1"/>
    <property type="match status" value="1"/>
</dbReference>
<dbReference type="PANTHER" id="PTHR11922:SF2">
    <property type="entry name" value="GMP SYNTHASE [GLUTAMINE-HYDROLYZING]"/>
    <property type="match status" value="1"/>
</dbReference>
<dbReference type="PANTHER" id="PTHR11922">
    <property type="entry name" value="GMP SYNTHASE-RELATED"/>
    <property type="match status" value="1"/>
</dbReference>
<dbReference type="Pfam" id="PF00117">
    <property type="entry name" value="GATase"/>
    <property type="match status" value="1"/>
</dbReference>
<dbReference type="Pfam" id="PF00958">
    <property type="entry name" value="GMP_synt_C"/>
    <property type="match status" value="1"/>
</dbReference>
<dbReference type="Pfam" id="PF02540">
    <property type="entry name" value="NAD_synthase"/>
    <property type="match status" value="1"/>
</dbReference>
<dbReference type="PRINTS" id="PR00097">
    <property type="entry name" value="ANTSNTHASEII"/>
</dbReference>
<dbReference type="PRINTS" id="PR00099">
    <property type="entry name" value="CPSGATASE"/>
</dbReference>
<dbReference type="PRINTS" id="PR00096">
    <property type="entry name" value="GATASE"/>
</dbReference>
<dbReference type="SUPFAM" id="SSF52402">
    <property type="entry name" value="Adenine nucleotide alpha hydrolases-like"/>
    <property type="match status" value="1"/>
</dbReference>
<dbReference type="SUPFAM" id="SSF52317">
    <property type="entry name" value="Class I glutamine amidotransferase-like"/>
    <property type="match status" value="1"/>
</dbReference>
<dbReference type="SUPFAM" id="SSF54810">
    <property type="entry name" value="GMP synthetase C-terminal dimerisation domain"/>
    <property type="match status" value="1"/>
</dbReference>
<dbReference type="PROSITE" id="PS51273">
    <property type="entry name" value="GATASE_TYPE_1"/>
    <property type="match status" value="1"/>
</dbReference>
<dbReference type="PROSITE" id="PS51553">
    <property type="entry name" value="GMPS_ATP_PPASE"/>
    <property type="match status" value="1"/>
</dbReference>
<proteinExistence type="inferred from homology"/>
<gene>
    <name evidence="1" type="primary">guaA</name>
    <name type="ordered locus">Ping_2949</name>
</gene>